<accession>A9A8T5</accession>
<name>DHQS_METM6</name>
<feature type="chain" id="PRO_0000372049" description="3-dehydroquinate synthase">
    <location>
        <begin position="1"/>
        <end position="361"/>
    </location>
</feature>
<keyword id="KW-0028">Amino-acid biosynthesis</keyword>
<keyword id="KW-0057">Aromatic amino acid biosynthesis</keyword>
<keyword id="KW-0520">NAD</keyword>
<keyword id="KW-0560">Oxidoreductase</keyword>
<protein>
    <recommendedName>
        <fullName evidence="1">3-dehydroquinate synthase</fullName>
        <shortName evidence="1">DHQ synthase</shortName>
        <ecNumber evidence="1">1.4.1.24</ecNumber>
    </recommendedName>
    <alternativeName>
        <fullName evidence="1">3-dehydroquinate synthase II</fullName>
    </alternativeName>
</protein>
<organism>
    <name type="scientific">Methanococcus maripaludis (strain C6 / ATCC BAA-1332)</name>
    <dbReference type="NCBI Taxonomy" id="444158"/>
    <lineage>
        <taxon>Archaea</taxon>
        <taxon>Methanobacteriati</taxon>
        <taxon>Methanobacteriota</taxon>
        <taxon>Methanomada group</taxon>
        <taxon>Methanococci</taxon>
        <taxon>Methanococcales</taxon>
        <taxon>Methanococcaceae</taxon>
        <taxon>Methanococcus</taxon>
    </lineage>
</organism>
<proteinExistence type="inferred from homology"/>
<dbReference type="EC" id="1.4.1.24" evidence="1"/>
<dbReference type="EMBL" id="CP000867">
    <property type="protein sequence ID" value="ABX01758.1"/>
    <property type="molecule type" value="Genomic_DNA"/>
</dbReference>
<dbReference type="STRING" id="444158.MmarC6_0943"/>
<dbReference type="KEGG" id="mmx:MmarC6_0943"/>
<dbReference type="eggNOG" id="arCOG04353">
    <property type="taxonomic scope" value="Archaea"/>
</dbReference>
<dbReference type="HOGENOM" id="CLU_056379_0_0_2"/>
<dbReference type="OrthoDB" id="10265at2157"/>
<dbReference type="PhylomeDB" id="A9A8T5"/>
<dbReference type="GO" id="GO:0003856">
    <property type="term" value="F:3-dehydroquinate synthase activity"/>
    <property type="evidence" value="ECO:0007669"/>
    <property type="project" value="InterPro"/>
</dbReference>
<dbReference type="GO" id="GO:0102042">
    <property type="term" value="F:dehydroquinate synthase activity"/>
    <property type="evidence" value="ECO:0007669"/>
    <property type="project" value="UniProtKB-EC"/>
</dbReference>
<dbReference type="GO" id="GO:0051287">
    <property type="term" value="F:NAD binding"/>
    <property type="evidence" value="ECO:0007669"/>
    <property type="project" value="UniProtKB-UniRule"/>
</dbReference>
<dbReference type="GO" id="GO:0008652">
    <property type="term" value="P:amino acid biosynthetic process"/>
    <property type="evidence" value="ECO:0007669"/>
    <property type="project" value="UniProtKB-KW"/>
</dbReference>
<dbReference type="GO" id="GO:0009073">
    <property type="term" value="P:aromatic amino acid family biosynthetic process"/>
    <property type="evidence" value="ECO:0007669"/>
    <property type="project" value="UniProtKB-UniRule"/>
</dbReference>
<dbReference type="HAMAP" id="MF_01244">
    <property type="entry name" value="Arch_DHQ_synthase"/>
    <property type="match status" value="1"/>
</dbReference>
<dbReference type="InterPro" id="IPR002812">
    <property type="entry name" value="DHQ_synth"/>
</dbReference>
<dbReference type="NCBIfam" id="NF002624">
    <property type="entry name" value="PRK02290.1-2"/>
    <property type="match status" value="1"/>
</dbReference>
<dbReference type="PANTHER" id="PTHR33563">
    <property type="match status" value="1"/>
</dbReference>
<dbReference type="PANTHER" id="PTHR33563:SF1">
    <property type="entry name" value="3-DEHYDROQUINATE SYNTHASE"/>
    <property type="match status" value="1"/>
</dbReference>
<dbReference type="Pfam" id="PF01959">
    <property type="entry name" value="DHQS"/>
    <property type="match status" value="1"/>
</dbReference>
<dbReference type="PIRSF" id="PIRSF006655">
    <property type="entry name" value="DHQ_synth"/>
    <property type="match status" value="1"/>
</dbReference>
<sequence length="361" mass="39882">MKFGWIKTTGTDSEERMDSVKDALESSIPGIIAEKDEISSVRELGNIKIVSDSLDADVVLINKGEDLEILKSAKLSGKETAVYVVINTKDDEVYATEVSKLDFVDYIVLEGSDWTIIPLENIIADLFGEEIKIVSVVTSVKDAEAAYEILEKGVDGVVLIPNDINEVKDFSKLIERMNSESVKLDYATVTKIEPVGSGDRVCIDTCSMMEMGEGMLIGSYSRGMFLVHSETVENPYVATRPFRVNAGPVHAYILCPENKTKYLSDLKAGDKVLVVNKNGETRESIIGRVKIEKRPLFLVEAEYNGENLRTILQNAETIRLVGEDGKPVSVVDLKVGTKVLIKPDENARHFGMAIKETIIEK</sequence>
<gene>
    <name evidence="1" type="primary">aroB'</name>
    <name type="ordered locus">MmarC6_0943</name>
</gene>
<comment type="function">
    <text evidence="1">Catalyzes the oxidative deamination and cyclization of 2-amino-3,7-dideoxy-D-threo-hept-6-ulosonic acid (ADH) to yield 3-dehydroquinate (DHQ), which is fed into the canonical shikimic pathway of aromatic amino acid biosynthesis.</text>
</comment>
<comment type="catalytic activity">
    <reaction evidence="1">
        <text>2-amino-2,3,7-trideoxy-D-lyxo-hept-6-ulosonate + NAD(+) + H2O = 3-dehydroquinate + NH4(+) + NADH + H(+)</text>
        <dbReference type="Rhea" id="RHEA:25956"/>
        <dbReference type="ChEBI" id="CHEBI:15377"/>
        <dbReference type="ChEBI" id="CHEBI:15378"/>
        <dbReference type="ChEBI" id="CHEBI:28938"/>
        <dbReference type="ChEBI" id="CHEBI:32364"/>
        <dbReference type="ChEBI" id="CHEBI:57540"/>
        <dbReference type="ChEBI" id="CHEBI:57945"/>
        <dbReference type="ChEBI" id="CHEBI:58859"/>
        <dbReference type="EC" id="1.4.1.24"/>
    </reaction>
</comment>
<comment type="similarity">
    <text evidence="1">Belongs to the archaeal-type DHQ synthase family.</text>
</comment>
<reference key="1">
    <citation type="submission" date="2007-10" db="EMBL/GenBank/DDBJ databases">
        <title>Complete sequence of Methanococcus maripaludis C6.</title>
        <authorList>
            <consortium name="US DOE Joint Genome Institute"/>
            <person name="Copeland A."/>
            <person name="Lucas S."/>
            <person name="Lapidus A."/>
            <person name="Barry K."/>
            <person name="Glavina del Rio T."/>
            <person name="Dalin E."/>
            <person name="Tice H."/>
            <person name="Pitluck S."/>
            <person name="Clum A."/>
            <person name="Schmutz J."/>
            <person name="Larimer F."/>
            <person name="Land M."/>
            <person name="Hauser L."/>
            <person name="Kyrpides N."/>
            <person name="Mikhailova N."/>
            <person name="Sieprawska-Lupa M."/>
            <person name="Whitman W.B."/>
            <person name="Richardson P."/>
        </authorList>
    </citation>
    <scope>NUCLEOTIDE SEQUENCE [LARGE SCALE GENOMIC DNA]</scope>
    <source>
        <strain>C6 / ATCC BAA-1332</strain>
    </source>
</reference>
<evidence type="ECO:0000255" key="1">
    <source>
        <dbReference type="HAMAP-Rule" id="MF_01244"/>
    </source>
</evidence>